<accession>O80795</accession>
<accession>Q6NLP4</accession>
<feature type="chain" id="PRO_0000401356" description="Probable inactive receptor-like protein kinase At1g65250">
    <location>
        <begin position="1"/>
        <end position="372"/>
    </location>
</feature>
<feature type="domain" description="Protein kinase" evidence="2">
    <location>
        <begin position="1"/>
        <end position="314"/>
    </location>
</feature>
<feature type="region of interest" description="Disordered" evidence="3">
    <location>
        <begin position="348"/>
        <end position="372"/>
    </location>
</feature>
<feature type="compositionally biased region" description="Polar residues" evidence="3">
    <location>
        <begin position="354"/>
        <end position="372"/>
    </location>
</feature>
<feature type="binding site" evidence="2">
    <location>
        <begin position="1"/>
        <end position="4"/>
    </location>
    <ligand>
        <name>ATP</name>
        <dbReference type="ChEBI" id="CHEBI:30616"/>
    </ligand>
</feature>
<feature type="binding site" evidence="2">
    <location>
        <position position="38"/>
    </location>
    <ligand>
        <name>ATP</name>
        <dbReference type="ChEBI" id="CHEBI:30616"/>
    </ligand>
</feature>
<feature type="modified residue" description="Phosphotyrosine" evidence="1">
    <location>
        <position position="128"/>
    </location>
</feature>
<feature type="modified residue" description="Phosphotyrosine" evidence="1">
    <location>
        <position position="221"/>
    </location>
</feature>
<feature type="sequence conflict" description="In Ref. 3; AAS76773 and 4; BAD94589." evidence="4" ref="3 4">
    <original>G</original>
    <variation>V</variation>
    <location>
        <position position="237"/>
    </location>
</feature>
<name>Y1652_ARATH</name>
<keyword id="KW-0067">ATP-binding</keyword>
<keyword id="KW-0547">Nucleotide-binding</keyword>
<keyword id="KW-0597">Phosphoprotein</keyword>
<keyword id="KW-1185">Reference proteome</keyword>
<proteinExistence type="evidence at transcript level"/>
<evidence type="ECO:0000250" key="1">
    <source>
        <dbReference type="UniProtKB" id="O48814"/>
    </source>
</evidence>
<evidence type="ECO:0000255" key="2">
    <source>
        <dbReference type="PROSITE-ProRule" id="PRU00159"/>
    </source>
</evidence>
<evidence type="ECO:0000256" key="3">
    <source>
        <dbReference type="SAM" id="MobiDB-lite"/>
    </source>
</evidence>
<evidence type="ECO:0000305" key="4"/>
<sequence>MGWLRKKKKPKSDIASERGAKLLEELIECCDGKSNPIKFFSADEILKATNDFSDSNFVLRLEVPFKWYSGKNENHPMILIKKDVGWWSGLRVDRLCRDIAVSSMVSGHKNFMKLVGCCLELDYPVMVYHSVKKHYKLEISEQPWKKRMKIAEDIATALAYLHTAFPRPFVYRILSHWNILLDEDGVAKLTDFSHCVSIPEGETFVRVDRDVGLYSYFADNYVRSGLVSDKTDVFAFGIFMGHRLLLGYEYYFEHYRGEEEESEDGFDSLMKRHARNLLSTLKEDRPMEEIADSKMIEKMGQISEQERCQMKAFLKLSLRCTGPSEEVPTMVEVAKELNKIQRSLFNDSSSLSSGQTQLDSAQDISSTVVLSN</sequence>
<comment type="domain">
    <text>The protein kinase domain is predicted to be catalytically inactive.</text>
</comment>
<comment type="similarity">
    <text evidence="4">Belongs to the protein kinase superfamily.</text>
</comment>
<gene>
    <name type="ordered locus">At1g65250</name>
    <name type="ORF">T8F5.1</name>
</gene>
<protein>
    <recommendedName>
        <fullName>Probable inactive receptor-like protein kinase At1g65250</fullName>
    </recommendedName>
</protein>
<organism>
    <name type="scientific">Arabidopsis thaliana</name>
    <name type="common">Mouse-ear cress</name>
    <dbReference type="NCBI Taxonomy" id="3702"/>
    <lineage>
        <taxon>Eukaryota</taxon>
        <taxon>Viridiplantae</taxon>
        <taxon>Streptophyta</taxon>
        <taxon>Embryophyta</taxon>
        <taxon>Tracheophyta</taxon>
        <taxon>Spermatophyta</taxon>
        <taxon>Magnoliopsida</taxon>
        <taxon>eudicotyledons</taxon>
        <taxon>Gunneridae</taxon>
        <taxon>Pentapetalae</taxon>
        <taxon>rosids</taxon>
        <taxon>malvids</taxon>
        <taxon>Brassicales</taxon>
        <taxon>Brassicaceae</taxon>
        <taxon>Camelineae</taxon>
        <taxon>Arabidopsis</taxon>
    </lineage>
</organism>
<reference key="1">
    <citation type="journal article" date="2000" name="Nature">
        <title>Sequence and analysis of chromosome 1 of the plant Arabidopsis thaliana.</title>
        <authorList>
            <person name="Theologis A."/>
            <person name="Ecker J.R."/>
            <person name="Palm C.J."/>
            <person name="Federspiel N.A."/>
            <person name="Kaul S."/>
            <person name="White O."/>
            <person name="Alonso J."/>
            <person name="Altafi H."/>
            <person name="Araujo R."/>
            <person name="Bowman C.L."/>
            <person name="Brooks S.Y."/>
            <person name="Buehler E."/>
            <person name="Chan A."/>
            <person name="Chao Q."/>
            <person name="Chen H."/>
            <person name="Cheuk R.F."/>
            <person name="Chin C.W."/>
            <person name="Chung M.K."/>
            <person name="Conn L."/>
            <person name="Conway A.B."/>
            <person name="Conway A.R."/>
            <person name="Creasy T.H."/>
            <person name="Dewar K."/>
            <person name="Dunn P."/>
            <person name="Etgu P."/>
            <person name="Feldblyum T.V."/>
            <person name="Feng J.-D."/>
            <person name="Fong B."/>
            <person name="Fujii C.Y."/>
            <person name="Gill J.E."/>
            <person name="Goldsmith A.D."/>
            <person name="Haas B."/>
            <person name="Hansen N.F."/>
            <person name="Hughes B."/>
            <person name="Huizar L."/>
            <person name="Hunter J.L."/>
            <person name="Jenkins J."/>
            <person name="Johnson-Hopson C."/>
            <person name="Khan S."/>
            <person name="Khaykin E."/>
            <person name="Kim C.J."/>
            <person name="Koo H.L."/>
            <person name="Kremenetskaia I."/>
            <person name="Kurtz D.B."/>
            <person name="Kwan A."/>
            <person name="Lam B."/>
            <person name="Langin-Hooper S."/>
            <person name="Lee A."/>
            <person name="Lee J.M."/>
            <person name="Lenz C.A."/>
            <person name="Li J.H."/>
            <person name="Li Y.-P."/>
            <person name="Lin X."/>
            <person name="Liu S.X."/>
            <person name="Liu Z.A."/>
            <person name="Luros J.S."/>
            <person name="Maiti R."/>
            <person name="Marziali A."/>
            <person name="Militscher J."/>
            <person name="Miranda M."/>
            <person name="Nguyen M."/>
            <person name="Nierman W.C."/>
            <person name="Osborne B.I."/>
            <person name="Pai G."/>
            <person name="Peterson J."/>
            <person name="Pham P.K."/>
            <person name="Rizzo M."/>
            <person name="Rooney T."/>
            <person name="Rowley D."/>
            <person name="Sakano H."/>
            <person name="Salzberg S.L."/>
            <person name="Schwartz J.R."/>
            <person name="Shinn P."/>
            <person name="Southwick A.M."/>
            <person name="Sun H."/>
            <person name="Tallon L.J."/>
            <person name="Tambunga G."/>
            <person name="Toriumi M.J."/>
            <person name="Town C.D."/>
            <person name="Utterback T."/>
            <person name="Van Aken S."/>
            <person name="Vaysberg M."/>
            <person name="Vysotskaia V.S."/>
            <person name="Walker M."/>
            <person name="Wu D."/>
            <person name="Yu G."/>
            <person name="Fraser C.M."/>
            <person name="Venter J.C."/>
            <person name="Davis R.W."/>
        </authorList>
    </citation>
    <scope>NUCLEOTIDE SEQUENCE [LARGE SCALE GENOMIC DNA]</scope>
    <source>
        <strain>cv. Columbia</strain>
    </source>
</reference>
<reference key="2">
    <citation type="journal article" date="2017" name="Plant J.">
        <title>Araport11: a complete reannotation of the Arabidopsis thaliana reference genome.</title>
        <authorList>
            <person name="Cheng C.Y."/>
            <person name="Krishnakumar V."/>
            <person name="Chan A.P."/>
            <person name="Thibaud-Nissen F."/>
            <person name="Schobel S."/>
            <person name="Town C.D."/>
        </authorList>
    </citation>
    <scope>GENOME REANNOTATION</scope>
    <source>
        <strain>cv. Columbia</strain>
    </source>
</reference>
<reference key="3">
    <citation type="submission" date="2004-03" db="EMBL/GenBank/DDBJ databases">
        <title>Arabidopsis ORF clones.</title>
        <authorList>
            <person name="Cheuk R.F."/>
            <person name="Chen H."/>
            <person name="Kim C.J."/>
            <person name="Shinn P."/>
            <person name="Carninci P."/>
            <person name="Hayashizaki Y."/>
            <person name="Ishida J."/>
            <person name="Kamiya A."/>
            <person name="Kawai J."/>
            <person name="Narusaka M."/>
            <person name="Sakurai T."/>
            <person name="Satou M."/>
            <person name="Seki M."/>
            <person name="Shinozaki K."/>
            <person name="Ecker J.R."/>
        </authorList>
    </citation>
    <scope>NUCLEOTIDE SEQUENCE [LARGE SCALE MRNA]</scope>
    <source>
        <strain>cv. Columbia</strain>
    </source>
</reference>
<reference key="4">
    <citation type="submission" date="2005-03" db="EMBL/GenBank/DDBJ databases">
        <title>Large-scale analysis of RIKEN Arabidopsis full-length (RAFL) cDNAs.</title>
        <authorList>
            <person name="Totoki Y."/>
            <person name="Seki M."/>
            <person name="Ishida J."/>
            <person name="Nakajima M."/>
            <person name="Enju A."/>
            <person name="Kamiya A."/>
            <person name="Narusaka M."/>
            <person name="Shin-i T."/>
            <person name="Nakagawa M."/>
            <person name="Sakamoto N."/>
            <person name="Oishi K."/>
            <person name="Kohara Y."/>
            <person name="Kobayashi M."/>
            <person name="Toyoda A."/>
            <person name="Sakaki Y."/>
            <person name="Sakurai T."/>
            <person name="Iida K."/>
            <person name="Akiyama K."/>
            <person name="Satou M."/>
            <person name="Toyoda T."/>
            <person name="Konagaya A."/>
            <person name="Carninci P."/>
            <person name="Kawai J."/>
            <person name="Hayashizaki Y."/>
            <person name="Shinozaki K."/>
        </authorList>
    </citation>
    <scope>NUCLEOTIDE SEQUENCE [LARGE SCALE MRNA]</scope>
    <source>
        <strain>cv. Columbia</strain>
    </source>
</reference>
<dbReference type="EMBL" id="AC004512">
    <property type="protein sequence ID" value="AAC27134.1"/>
    <property type="molecule type" value="Genomic_DNA"/>
</dbReference>
<dbReference type="EMBL" id="CP002684">
    <property type="protein sequence ID" value="AEE34348.1"/>
    <property type="molecule type" value="Genomic_DNA"/>
</dbReference>
<dbReference type="EMBL" id="BT012286">
    <property type="protein sequence ID" value="AAS76773.1"/>
    <property type="molecule type" value="mRNA"/>
</dbReference>
<dbReference type="EMBL" id="AK221469">
    <property type="protein sequence ID" value="BAD94589.1"/>
    <property type="molecule type" value="mRNA"/>
</dbReference>
<dbReference type="PIR" id="T02346">
    <property type="entry name" value="T02346"/>
</dbReference>
<dbReference type="RefSeq" id="NP_176704.1">
    <property type="nucleotide sequence ID" value="NM_105198.3"/>
</dbReference>
<dbReference type="SMR" id="O80795"/>
<dbReference type="FunCoup" id="O80795">
    <property type="interactions" value="21"/>
</dbReference>
<dbReference type="iPTMnet" id="O80795"/>
<dbReference type="PaxDb" id="3702-AT1G65250.1"/>
<dbReference type="ProteomicsDB" id="234340"/>
<dbReference type="DNASU" id="842832"/>
<dbReference type="EnsemblPlants" id="AT1G65250.1">
    <property type="protein sequence ID" value="AT1G65250.1"/>
    <property type="gene ID" value="AT1G65250"/>
</dbReference>
<dbReference type="GeneID" id="842832"/>
<dbReference type="Gramene" id="AT1G65250.1">
    <property type="protein sequence ID" value="AT1G65250.1"/>
    <property type="gene ID" value="AT1G65250"/>
</dbReference>
<dbReference type="KEGG" id="ath:AT1G65250"/>
<dbReference type="Araport" id="AT1G65250"/>
<dbReference type="TAIR" id="AT1G65250">
    <property type="gene designation" value="ZRK14"/>
</dbReference>
<dbReference type="eggNOG" id="KOG1187">
    <property type="taxonomic scope" value="Eukaryota"/>
</dbReference>
<dbReference type="HOGENOM" id="CLU_000288_21_4_1"/>
<dbReference type="InParanoid" id="O80795"/>
<dbReference type="OMA" id="VIVYYDA"/>
<dbReference type="PhylomeDB" id="O80795"/>
<dbReference type="PRO" id="PR:O80795"/>
<dbReference type="Proteomes" id="UP000006548">
    <property type="component" value="Chromosome 1"/>
</dbReference>
<dbReference type="ExpressionAtlas" id="O80795">
    <property type="expression patterns" value="baseline and differential"/>
</dbReference>
<dbReference type="GO" id="GO:0005524">
    <property type="term" value="F:ATP binding"/>
    <property type="evidence" value="ECO:0007669"/>
    <property type="project" value="UniProtKB-KW"/>
</dbReference>
<dbReference type="GO" id="GO:0004672">
    <property type="term" value="F:protein kinase activity"/>
    <property type="evidence" value="ECO:0007669"/>
    <property type="project" value="InterPro"/>
</dbReference>
<dbReference type="GO" id="GO:0007166">
    <property type="term" value="P:cell surface receptor signaling pathway"/>
    <property type="evidence" value="ECO:0007669"/>
    <property type="project" value="InterPro"/>
</dbReference>
<dbReference type="FunFam" id="3.30.200.20:FF:000515">
    <property type="entry name" value="Inactive serine/threonine-protein kinase"/>
    <property type="match status" value="1"/>
</dbReference>
<dbReference type="FunFam" id="1.10.510.10:FF:001251">
    <property type="entry name" value="Inactive serine/threonine-protein kinase At1g67470"/>
    <property type="match status" value="1"/>
</dbReference>
<dbReference type="Gene3D" id="3.30.200.20">
    <property type="entry name" value="Phosphorylase Kinase, domain 1"/>
    <property type="match status" value="1"/>
</dbReference>
<dbReference type="Gene3D" id="1.10.510.10">
    <property type="entry name" value="Transferase(Phosphotransferase) domain 1"/>
    <property type="match status" value="1"/>
</dbReference>
<dbReference type="InterPro" id="IPR011009">
    <property type="entry name" value="Kinase-like_dom_sf"/>
</dbReference>
<dbReference type="InterPro" id="IPR000719">
    <property type="entry name" value="Prot_kinase_dom"/>
</dbReference>
<dbReference type="InterPro" id="IPR045274">
    <property type="entry name" value="WAK-like"/>
</dbReference>
<dbReference type="PANTHER" id="PTHR27005:SF188">
    <property type="entry name" value="INACTIVE SERINE_THREONINE-PROTEIN KINASE ZRK12-RELATED"/>
    <property type="match status" value="1"/>
</dbReference>
<dbReference type="PANTHER" id="PTHR27005">
    <property type="entry name" value="WALL-ASSOCIATED RECEPTOR KINASE-LIKE 21"/>
    <property type="match status" value="1"/>
</dbReference>
<dbReference type="Pfam" id="PF00069">
    <property type="entry name" value="Pkinase"/>
    <property type="match status" value="1"/>
</dbReference>
<dbReference type="SUPFAM" id="SSF56112">
    <property type="entry name" value="Protein kinase-like (PK-like)"/>
    <property type="match status" value="1"/>
</dbReference>
<dbReference type="PROSITE" id="PS50011">
    <property type="entry name" value="PROTEIN_KINASE_DOM"/>
    <property type="match status" value="1"/>
</dbReference>